<feature type="chain" id="PRO_0000140281" description="Peptide methionine sulfoxide reductase MsrB">
    <location>
        <begin position="1"/>
        <end position="145"/>
    </location>
</feature>
<feature type="domain" description="MsrB" evidence="2">
    <location>
        <begin position="6"/>
        <end position="129"/>
    </location>
</feature>
<feature type="active site" description="Nucleophile" evidence="2">
    <location>
        <position position="118"/>
    </location>
</feature>
<accession>Q71YF7</accession>
<proteinExistence type="inferred from homology"/>
<comment type="catalytic activity">
    <reaction evidence="1">
        <text>L-methionyl-[protein] + [thioredoxin]-disulfide + H2O = L-methionyl-(R)-S-oxide-[protein] + [thioredoxin]-dithiol</text>
        <dbReference type="Rhea" id="RHEA:24164"/>
        <dbReference type="Rhea" id="RHEA-COMP:10698"/>
        <dbReference type="Rhea" id="RHEA-COMP:10700"/>
        <dbReference type="Rhea" id="RHEA-COMP:12313"/>
        <dbReference type="Rhea" id="RHEA-COMP:12314"/>
        <dbReference type="ChEBI" id="CHEBI:15377"/>
        <dbReference type="ChEBI" id="CHEBI:16044"/>
        <dbReference type="ChEBI" id="CHEBI:29950"/>
        <dbReference type="ChEBI" id="CHEBI:45764"/>
        <dbReference type="ChEBI" id="CHEBI:50058"/>
        <dbReference type="EC" id="1.8.4.12"/>
    </reaction>
</comment>
<comment type="similarity">
    <text evidence="1">Belongs to the MsrB Met sulfoxide reductase family.</text>
</comment>
<gene>
    <name evidence="1" type="primary">msrB</name>
    <name type="ordered locus">LMOf2365_1887</name>
</gene>
<keyword id="KW-0560">Oxidoreductase</keyword>
<protein>
    <recommendedName>
        <fullName evidence="1">Peptide methionine sulfoxide reductase MsrB</fullName>
        <ecNumber evidence="1">1.8.4.12</ecNumber>
    </recommendedName>
    <alternativeName>
        <fullName evidence="1">Peptide-methionine (R)-S-oxide reductase</fullName>
    </alternativeName>
</protein>
<evidence type="ECO:0000255" key="1">
    <source>
        <dbReference type="HAMAP-Rule" id="MF_01400"/>
    </source>
</evidence>
<evidence type="ECO:0000255" key="2">
    <source>
        <dbReference type="PROSITE-ProRule" id="PRU01126"/>
    </source>
</evidence>
<sequence>MDESKKNERLQQLTDIQYNVTQKAGTERPFQNEFYDNEAKGIYVDIVSGKPLFSSNDQYDAGCGWPSFTKPIDEAEVIEHRDLTHGMIRTEVKSADADSHLGHVFPDGPQDKGGLRYCINSAALRFIPVDKLEEEGYQAYKKIFE</sequence>
<name>MSRB_LISMF</name>
<dbReference type="EC" id="1.8.4.12" evidence="1"/>
<dbReference type="EMBL" id="AE017262">
    <property type="protein sequence ID" value="AAT04657.1"/>
    <property type="molecule type" value="Genomic_DNA"/>
</dbReference>
<dbReference type="RefSeq" id="WP_003725815.1">
    <property type="nucleotide sequence ID" value="NC_002973.6"/>
</dbReference>
<dbReference type="SMR" id="Q71YF7"/>
<dbReference type="KEGG" id="lmf:LMOf2365_1887"/>
<dbReference type="HOGENOM" id="CLU_031040_8_5_9"/>
<dbReference type="GO" id="GO:0005737">
    <property type="term" value="C:cytoplasm"/>
    <property type="evidence" value="ECO:0007669"/>
    <property type="project" value="TreeGrafter"/>
</dbReference>
<dbReference type="GO" id="GO:0033743">
    <property type="term" value="F:peptide-methionine (R)-S-oxide reductase activity"/>
    <property type="evidence" value="ECO:0007669"/>
    <property type="project" value="UniProtKB-UniRule"/>
</dbReference>
<dbReference type="GO" id="GO:0030091">
    <property type="term" value="P:protein repair"/>
    <property type="evidence" value="ECO:0007669"/>
    <property type="project" value="InterPro"/>
</dbReference>
<dbReference type="GO" id="GO:0006979">
    <property type="term" value="P:response to oxidative stress"/>
    <property type="evidence" value="ECO:0007669"/>
    <property type="project" value="InterPro"/>
</dbReference>
<dbReference type="FunFam" id="2.170.150.20:FF:000003">
    <property type="entry name" value="Peptide methionine sulfoxide reductase MsrB"/>
    <property type="match status" value="1"/>
</dbReference>
<dbReference type="Gene3D" id="2.170.150.20">
    <property type="entry name" value="Peptide methionine sulfoxide reductase"/>
    <property type="match status" value="1"/>
</dbReference>
<dbReference type="HAMAP" id="MF_01400">
    <property type="entry name" value="MsrB"/>
    <property type="match status" value="1"/>
</dbReference>
<dbReference type="InterPro" id="IPR028427">
    <property type="entry name" value="Met_Sox_Rdtase_MsrB"/>
</dbReference>
<dbReference type="InterPro" id="IPR002579">
    <property type="entry name" value="Met_Sox_Rdtase_MsrB_dom"/>
</dbReference>
<dbReference type="InterPro" id="IPR011057">
    <property type="entry name" value="Mss4-like_sf"/>
</dbReference>
<dbReference type="NCBIfam" id="TIGR00357">
    <property type="entry name" value="peptide-methionine (R)-S-oxide reductase MsrB"/>
    <property type="match status" value="1"/>
</dbReference>
<dbReference type="PANTHER" id="PTHR10173">
    <property type="entry name" value="METHIONINE SULFOXIDE REDUCTASE"/>
    <property type="match status" value="1"/>
</dbReference>
<dbReference type="PANTHER" id="PTHR10173:SF59">
    <property type="entry name" value="PEPTIDE METHIONINE SULFOXIDE REDUCTASE MSRA_MSRB"/>
    <property type="match status" value="1"/>
</dbReference>
<dbReference type="Pfam" id="PF01641">
    <property type="entry name" value="SelR"/>
    <property type="match status" value="1"/>
</dbReference>
<dbReference type="SUPFAM" id="SSF51316">
    <property type="entry name" value="Mss4-like"/>
    <property type="match status" value="1"/>
</dbReference>
<dbReference type="PROSITE" id="PS51790">
    <property type="entry name" value="MSRB"/>
    <property type="match status" value="1"/>
</dbReference>
<organism>
    <name type="scientific">Listeria monocytogenes serotype 4b (strain F2365)</name>
    <dbReference type="NCBI Taxonomy" id="265669"/>
    <lineage>
        <taxon>Bacteria</taxon>
        <taxon>Bacillati</taxon>
        <taxon>Bacillota</taxon>
        <taxon>Bacilli</taxon>
        <taxon>Bacillales</taxon>
        <taxon>Listeriaceae</taxon>
        <taxon>Listeria</taxon>
    </lineage>
</organism>
<reference key="1">
    <citation type="journal article" date="2004" name="Nucleic Acids Res.">
        <title>Whole genome comparisons of serotype 4b and 1/2a strains of the food-borne pathogen Listeria monocytogenes reveal new insights into the core genome components of this species.</title>
        <authorList>
            <person name="Nelson K.E."/>
            <person name="Fouts D.E."/>
            <person name="Mongodin E.F."/>
            <person name="Ravel J."/>
            <person name="DeBoy R.T."/>
            <person name="Kolonay J.F."/>
            <person name="Rasko D.A."/>
            <person name="Angiuoli S.V."/>
            <person name="Gill S.R."/>
            <person name="Paulsen I.T."/>
            <person name="Peterson J.D."/>
            <person name="White O."/>
            <person name="Nelson W.C."/>
            <person name="Nierman W.C."/>
            <person name="Beanan M.J."/>
            <person name="Brinkac L.M."/>
            <person name="Daugherty S.C."/>
            <person name="Dodson R.J."/>
            <person name="Durkin A.S."/>
            <person name="Madupu R."/>
            <person name="Haft D.H."/>
            <person name="Selengut J."/>
            <person name="Van Aken S.E."/>
            <person name="Khouri H.M."/>
            <person name="Fedorova N."/>
            <person name="Forberger H.A."/>
            <person name="Tran B."/>
            <person name="Kathariou S."/>
            <person name="Wonderling L.D."/>
            <person name="Uhlich G.A."/>
            <person name="Bayles D.O."/>
            <person name="Luchansky J.B."/>
            <person name="Fraser C.M."/>
        </authorList>
    </citation>
    <scope>NUCLEOTIDE SEQUENCE [LARGE SCALE GENOMIC DNA]</scope>
    <source>
        <strain>F2365</strain>
    </source>
</reference>